<gene>
    <name evidence="1" type="primary">uvrC</name>
    <name type="ordered locus">Abu_0787</name>
</gene>
<feature type="chain" id="PRO_1000077751" description="UvrABC system protein C">
    <location>
        <begin position="1"/>
        <end position="616"/>
    </location>
</feature>
<feature type="domain" description="GIY-YIG" evidence="1">
    <location>
        <begin position="12"/>
        <end position="97"/>
    </location>
</feature>
<feature type="domain" description="UVR" evidence="1">
    <location>
        <begin position="203"/>
        <end position="238"/>
    </location>
</feature>
<evidence type="ECO:0000255" key="1">
    <source>
        <dbReference type="HAMAP-Rule" id="MF_00203"/>
    </source>
</evidence>
<comment type="function">
    <text evidence="1">The UvrABC repair system catalyzes the recognition and processing of DNA lesions. UvrC both incises the 5' and 3' sides of the lesion. The N-terminal half is responsible for the 3' incision and the C-terminal half is responsible for the 5' incision.</text>
</comment>
<comment type="subunit">
    <text evidence="1">Interacts with UvrB in an incision complex.</text>
</comment>
<comment type="subcellular location">
    <subcellularLocation>
        <location evidence="1">Cytoplasm</location>
    </subcellularLocation>
</comment>
<comment type="similarity">
    <text evidence="1">Belongs to the UvrC family.</text>
</comment>
<reference key="1">
    <citation type="journal article" date="2007" name="PLoS ONE">
        <title>The complete genome sequence and analysis of the Epsilonproteobacterium Arcobacter butzleri.</title>
        <authorList>
            <person name="Miller W.G."/>
            <person name="Parker C.T."/>
            <person name="Rubenfield M."/>
            <person name="Mendz G.L."/>
            <person name="Woesten M.M.S.M."/>
            <person name="Ussery D.W."/>
            <person name="Stolz J.F."/>
            <person name="Binnewies T.T."/>
            <person name="Hallin P.F."/>
            <person name="Wang G."/>
            <person name="Malek J.A."/>
            <person name="Rogosin A."/>
            <person name="Stanker L.H."/>
            <person name="Mandrell R.E."/>
        </authorList>
    </citation>
    <scope>NUCLEOTIDE SEQUENCE [LARGE SCALE GENOMIC DNA]</scope>
    <source>
        <strain>RM4018</strain>
    </source>
</reference>
<accession>A8ESX8</accession>
<organism>
    <name type="scientific">Aliarcobacter butzleri (strain RM4018)</name>
    <name type="common">Arcobacter butzleri</name>
    <dbReference type="NCBI Taxonomy" id="367737"/>
    <lineage>
        <taxon>Bacteria</taxon>
        <taxon>Pseudomonadati</taxon>
        <taxon>Campylobacterota</taxon>
        <taxon>Epsilonproteobacteria</taxon>
        <taxon>Campylobacterales</taxon>
        <taxon>Arcobacteraceae</taxon>
        <taxon>Aliarcobacter</taxon>
    </lineage>
</organism>
<name>UVRC_ALIB4</name>
<dbReference type="EMBL" id="CP000361">
    <property type="protein sequence ID" value="ABV67052.1"/>
    <property type="molecule type" value="Genomic_DNA"/>
</dbReference>
<dbReference type="RefSeq" id="WP_012012529.1">
    <property type="nucleotide sequence ID" value="NC_009850.1"/>
</dbReference>
<dbReference type="SMR" id="A8ESX8"/>
<dbReference type="STRING" id="367737.Abu_0787"/>
<dbReference type="GeneID" id="24305224"/>
<dbReference type="KEGG" id="abu:Abu_0787"/>
<dbReference type="eggNOG" id="COG0322">
    <property type="taxonomic scope" value="Bacteria"/>
</dbReference>
<dbReference type="HOGENOM" id="CLU_014841_3_2_7"/>
<dbReference type="Proteomes" id="UP000001136">
    <property type="component" value="Chromosome"/>
</dbReference>
<dbReference type="GO" id="GO:0005737">
    <property type="term" value="C:cytoplasm"/>
    <property type="evidence" value="ECO:0007669"/>
    <property type="project" value="UniProtKB-SubCell"/>
</dbReference>
<dbReference type="GO" id="GO:0009380">
    <property type="term" value="C:excinuclease repair complex"/>
    <property type="evidence" value="ECO:0007669"/>
    <property type="project" value="InterPro"/>
</dbReference>
<dbReference type="GO" id="GO:0003677">
    <property type="term" value="F:DNA binding"/>
    <property type="evidence" value="ECO:0007669"/>
    <property type="project" value="UniProtKB-UniRule"/>
</dbReference>
<dbReference type="GO" id="GO:0009381">
    <property type="term" value="F:excinuclease ABC activity"/>
    <property type="evidence" value="ECO:0007669"/>
    <property type="project" value="UniProtKB-UniRule"/>
</dbReference>
<dbReference type="GO" id="GO:0006289">
    <property type="term" value="P:nucleotide-excision repair"/>
    <property type="evidence" value="ECO:0007669"/>
    <property type="project" value="UniProtKB-UniRule"/>
</dbReference>
<dbReference type="GO" id="GO:0009432">
    <property type="term" value="P:SOS response"/>
    <property type="evidence" value="ECO:0007669"/>
    <property type="project" value="UniProtKB-UniRule"/>
</dbReference>
<dbReference type="CDD" id="cd10434">
    <property type="entry name" value="GIY-YIG_UvrC_Cho"/>
    <property type="match status" value="1"/>
</dbReference>
<dbReference type="FunFam" id="3.40.1440.10:FF:000001">
    <property type="entry name" value="UvrABC system protein C"/>
    <property type="match status" value="1"/>
</dbReference>
<dbReference type="Gene3D" id="1.10.150.20">
    <property type="entry name" value="5' to 3' exonuclease, C-terminal subdomain"/>
    <property type="match status" value="1"/>
</dbReference>
<dbReference type="Gene3D" id="3.40.1440.10">
    <property type="entry name" value="GIY-YIG endonuclease"/>
    <property type="match status" value="1"/>
</dbReference>
<dbReference type="Gene3D" id="4.10.860.10">
    <property type="entry name" value="UVR domain"/>
    <property type="match status" value="1"/>
</dbReference>
<dbReference type="Gene3D" id="3.30.420.340">
    <property type="entry name" value="UvrC, RNAse H endonuclease domain"/>
    <property type="match status" value="1"/>
</dbReference>
<dbReference type="HAMAP" id="MF_00203">
    <property type="entry name" value="UvrC"/>
    <property type="match status" value="1"/>
</dbReference>
<dbReference type="InterPro" id="IPR000305">
    <property type="entry name" value="GIY-YIG_endonuc"/>
</dbReference>
<dbReference type="InterPro" id="IPR035901">
    <property type="entry name" value="GIY-YIG_endonuc_sf"/>
</dbReference>
<dbReference type="InterPro" id="IPR047296">
    <property type="entry name" value="GIY-YIG_UvrC_Cho"/>
</dbReference>
<dbReference type="InterPro" id="IPR010994">
    <property type="entry name" value="RuvA_2-like"/>
</dbReference>
<dbReference type="InterPro" id="IPR001943">
    <property type="entry name" value="UVR_dom"/>
</dbReference>
<dbReference type="InterPro" id="IPR036876">
    <property type="entry name" value="UVR_dom_sf"/>
</dbReference>
<dbReference type="InterPro" id="IPR050066">
    <property type="entry name" value="UvrABC_protein_C"/>
</dbReference>
<dbReference type="InterPro" id="IPR004791">
    <property type="entry name" value="UvrC"/>
</dbReference>
<dbReference type="InterPro" id="IPR001162">
    <property type="entry name" value="UvrC_RNase_H_dom"/>
</dbReference>
<dbReference type="InterPro" id="IPR038476">
    <property type="entry name" value="UvrC_RNase_H_dom_sf"/>
</dbReference>
<dbReference type="NCBIfam" id="TIGR00194">
    <property type="entry name" value="uvrC"/>
    <property type="match status" value="1"/>
</dbReference>
<dbReference type="PANTHER" id="PTHR30562:SF1">
    <property type="entry name" value="UVRABC SYSTEM PROTEIN C"/>
    <property type="match status" value="1"/>
</dbReference>
<dbReference type="PANTHER" id="PTHR30562">
    <property type="entry name" value="UVRC/OXIDOREDUCTASE"/>
    <property type="match status" value="1"/>
</dbReference>
<dbReference type="Pfam" id="PF01541">
    <property type="entry name" value="GIY-YIG"/>
    <property type="match status" value="1"/>
</dbReference>
<dbReference type="Pfam" id="PF02151">
    <property type="entry name" value="UVR"/>
    <property type="match status" value="1"/>
</dbReference>
<dbReference type="Pfam" id="PF22920">
    <property type="entry name" value="UvrC_RNaseH"/>
    <property type="match status" value="1"/>
</dbReference>
<dbReference type="Pfam" id="PF08459">
    <property type="entry name" value="UvrC_RNaseH_dom"/>
    <property type="match status" value="1"/>
</dbReference>
<dbReference type="SMART" id="SM00465">
    <property type="entry name" value="GIYc"/>
    <property type="match status" value="1"/>
</dbReference>
<dbReference type="SUPFAM" id="SSF46600">
    <property type="entry name" value="C-terminal UvrC-binding domain of UvrB"/>
    <property type="match status" value="1"/>
</dbReference>
<dbReference type="SUPFAM" id="SSF82771">
    <property type="entry name" value="GIY-YIG endonuclease"/>
    <property type="match status" value="1"/>
</dbReference>
<dbReference type="SUPFAM" id="SSF47781">
    <property type="entry name" value="RuvA domain 2-like"/>
    <property type="match status" value="1"/>
</dbReference>
<dbReference type="PROSITE" id="PS50164">
    <property type="entry name" value="GIY_YIG"/>
    <property type="match status" value="1"/>
</dbReference>
<dbReference type="PROSITE" id="PS50151">
    <property type="entry name" value="UVR"/>
    <property type="match status" value="1"/>
</dbReference>
<dbReference type="PROSITE" id="PS50165">
    <property type="entry name" value="UVRC"/>
    <property type="match status" value="1"/>
</dbReference>
<protein>
    <recommendedName>
        <fullName evidence="1">UvrABC system protein C</fullName>
        <shortName evidence="1">Protein UvrC</shortName>
    </recommendedName>
    <alternativeName>
        <fullName evidence="1">Excinuclease ABC subunit C</fullName>
    </alternativeName>
</protein>
<keyword id="KW-0963">Cytoplasm</keyword>
<keyword id="KW-0227">DNA damage</keyword>
<keyword id="KW-0228">DNA excision</keyword>
<keyword id="KW-0234">DNA repair</keyword>
<keyword id="KW-0267">Excision nuclease</keyword>
<keyword id="KW-1185">Reference proteome</keyword>
<keyword id="KW-0742">SOS response</keyword>
<proteinExistence type="inferred from homology"/>
<sequence>MNLQEKLQQLPNDAGVYQYFDKNGHLLYIGKAKILKNRVKSYFKFTPKLQPADKLSPRIYKMISEVESCEWIVVPNEHDALILENSLIKQLKPKYNILLRDDKTYPYIFVDFDEDFPRLDITRRIQKSKSIKYFGPYSTGARDMLDSIYEIVPLVQKKSCVKGKKACLFYQIQKCLAPCENKISKEEYAKIVENALEYIYNKTKLISKLNEKMLQYSNDFRFEEAMTLRDRIKTIEKSQIKSDIDLATNEDIDIFAINANNKKAVIVRMFLRDGKLTSSSHDFLKIDNFDEEFEFDYQEAYERAIINYYDNEIPLLPKEILIAHELEITNELEEFLHTRFNKKIKLINPKKDKKREIVNIALNNCDELLRIENSKNQTSIYEELKELFNLQTLPYLIESFDNSHMMGQATVGAMIVWNESLNTFDKKAFRHYNLESKDEYSQMKEMLIRRIESFEKNPAPDLWIIDGGETLLKLAFDIVQSVGVNLDIIAIAKEKIDAKAHRAKGKAKDIIHYKTKNGEFKSFNLLTSDKRLQFVQRQRDEAHRFAITFHKKQKRAQDKQISLLQIKGIGEAKIKKLLLYFGEFEKIKKASFDELKTVLNEKDASTILDYFTNFKD</sequence>